<proteinExistence type="evidence at protein level"/>
<reference key="1">
    <citation type="journal article" date="1989" name="Genes Dev.">
        <title>Molecular analysis of the armadillo locus: uniformly distributed transcripts and a protein with novel internal repeats are associated with a Drosophila segment polarity gene.</title>
        <authorList>
            <person name="Riggleman B."/>
            <person name="Wieschaus E."/>
            <person name="Schedl P."/>
        </authorList>
    </citation>
    <scope>NUCLEOTIDE SEQUENCE [GENOMIC DNA]</scope>
    <source>
        <strain>Oregon-R</strain>
        <tissue>Embryo</tissue>
    </source>
</reference>
<reference key="2">
    <citation type="journal article" date="1998" name="Curr. Biol.">
        <title>Roles of Armadillo, a Drosophila catenin, during central nervous system development.</title>
        <authorList>
            <person name="Loureiro J."/>
            <person name="Peifer M."/>
        </authorList>
    </citation>
    <scope>NUCLEOTIDE SEQUENCE [MRNA] (ISOFORMS CYTOPLASMIC AND NEURAL)</scope>
    <scope>FUNCTION</scope>
    <scope>TISSUE SPECIFICITY</scope>
    <source>
        <tissue>Head</tissue>
    </source>
</reference>
<reference key="3">
    <citation type="journal article" date="2000" name="Science">
        <title>The genome sequence of Drosophila melanogaster.</title>
        <authorList>
            <person name="Adams M.D."/>
            <person name="Celniker S.E."/>
            <person name="Holt R.A."/>
            <person name="Evans C.A."/>
            <person name="Gocayne J.D."/>
            <person name="Amanatides P.G."/>
            <person name="Scherer S.E."/>
            <person name="Li P.W."/>
            <person name="Hoskins R.A."/>
            <person name="Galle R.F."/>
            <person name="George R.A."/>
            <person name="Lewis S.E."/>
            <person name="Richards S."/>
            <person name="Ashburner M."/>
            <person name="Henderson S.N."/>
            <person name="Sutton G.G."/>
            <person name="Wortman J.R."/>
            <person name="Yandell M.D."/>
            <person name="Zhang Q."/>
            <person name="Chen L.X."/>
            <person name="Brandon R.C."/>
            <person name="Rogers Y.-H.C."/>
            <person name="Blazej R.G."/>
            <person name="Champe M."/>
            <person name="Pfeiffer B.D."/>
            <person name="Wan K.H."/>
            <person name="Doyle C."/>
            <person name="Baxter E.G."/>
            <person name="Helt G."/>
            <person name="Nelson C.R."/>
            <person name="Miklos G.L.G."/>
            <person name="Abril J.F."/>
            <person name="Agbayani A."/>
            <person name="An H.-J."/>
            <person name="Andrews-Pfannkoch C."/>
            <person name="Baldwin D."/>
            <person name="Ballew R.M."/>
            <person name="Basu A."/>
            <person name="Baxendale J."/>
            <person name="Bayraktaroglu L."/>
            <person name="Beasley E.M."/>
            <person name="Beeson K.Y."/>
            <person name="Benos P.V."/>
            <person name="Berman B.P."/>
            <person name="Bhandari D."/>
            <person name="Bolshakov S."/>
            <person name="Borkova D."/>
            <person name="Botchan M.R."/>
            <person name="Bouck J."/>
            <person name="Brokstein P."/>
            <person name="Brottier P."/>
            <person name="Burtis K.C."/>
            <person name="Busam D.A."/>
            <person name="Butler H."/>
            <person name="Cadieu E."/>
            <person name="Center A."/>
            <person name="Chandra I."/>
            <person name="Cherry J.M."/>
            <person name="Cawley S."/>
            <person name="Dahlke C."/>
            <person name="Davenport L.B."/>
            <person name="Davies P."/>
            <person name="de Pablos B."/>
            <person name="Delcher A."/>
            <person name="Deng Z."/>
            <person name="Mays A.D."/>
            <person name="Dew I."/>
            <person name="Dietz S.M."/>
            <person name="Dodson K."/>
            <person name="Doup L.E."/>
            <person name="Downes M."/>
            <person name="Dugan-Rocha S."/>
            <person name="Dunkov B.C."/>
            <person name="Dunn P."/>
            <person name="Durbin K.J."/>
            <person name="Evangelista C.C."/>
            <person name="Ferraz C."/>
            <person name="Ferriera S."/>
            <person name="Fleischmann W."/>
            <person name="Fosler C."/>
            <person name="Gabrielian A.E."/>
            <person name="Garg N.S."/>
            <person name="Gelbart W.M."/>
            <person name="Glasser K."/>
            <person name="Glodek A."/>
            <person name="Gong F."/>
            <person name="Gorrell J.H."/>
            <person name="Gu Z."/>
            <person name="Guan P."/>
            <person name="Harris M."/>
            <person name="Harris N.L."/>
            <person name="Harvey D.A."/>
            <person name="Heiman T.J."/>
            <person name="Hernandez J.R."/>
            <person name="Houck J."/>
            <person name="Hostin D."/>
            <person name="Houston K.A."/>
            <person name="Howland T.J."/>
            <person name="Wei M.-H."/>
            <person name="Ibegwam C."/>
            <person name="Jalali M."/>
            <person name="Kalush F."/>
            <person name="Karpen G.H."/>
            <person name="Ke Z."/>
            <person name="Kennison J.A."/>
            <person name="Ketchum K.A."/>
            <person name="Kimmel B.E."/>
            <person name="Kodira C.D."/>
            <person name="Kraft C.L."/>
            <person name="Kravitz S."/>
            <person name="Kulp D."/>
            <person name="Lai Z."/>
            <person name="Lasko P."/>
            <person name="Lei Y."/>
            <person name="Levitsky A.A."/>
            <person name="Li J.H."/>
            <person name="Li Z."/>
            <person name="Liang Y."/>
            <person name="Lin X."/>
            <person name="Liu X."/>
            <person name="Mattei B."/>
            <person name="McIntosh T.C."/>
            <person name="McLeod M.P."/>
            <person name="McPherson D."/>
            <person name="Merkulov G."/>
            <person name="Milshina N.V."/>
            <person name="Mobarry C."/>
            <person name="Morris J."/>
            <person name="Moshrefi A."/>
            <person name="Mount S.M."/>
            <person name="Moy M."/>
            <person name="Murphy B."/>
            <person name="Murphy L."/>
            <person name="Muzny D.M."/>
            <person name="Nelson D.L."/>
            <person name="Nelson D.R."/>
            <person name="Nelson K.A."/>
            <person name="Nixon K."/>
            <person name="Nusskern D.R."/>
            <person name="Pacleb J.M."/>
            <person name="Palazzolo M."/>
            <person name="Pittman G.S."/>
            <person name="Pan S."/>
            <person name="Pollard J."/>
            <person name="Puri V."/>
            <person name="Reese M.G."/>
            <person name="Reinert K."/>
            <person name="Remington K."/>
            <person name="Saunders R.D.C."/>
            <person name="Scheeler F."/>
            <person name="Shen H."/>
            <person name="Shue B.C."/>
            <person name="Siden-Kiamos I."/>
            <person name="Simpson M."/>
            <person name="Skupski M.P."/>
            <person name="Smith T.J."/>
            <person name="Spier E."/>
            <person name="Spradling A.C."/>
            <person name="Stapleton M."/>
            <person name="Strong R."/>
            <person name="Sun E."/>
            <person name="Svirskas R."/>
            <person name="Tector C."/>
            <person name="Turner R."/>
            <person name="Venter E."/>
            <person name="Wang A.H."/>
            <person name="Wang X."/>
            <person name="Wang Z.-Y."/>
            <person name="Wassarman D.A."/>
            <person name="Weinstock G.M."/>
            <person name="Weissenbach J."/>
            <person name="Williams S.M."/>
            <person name="Woodage T."/>
            <person name="Worley K.C."/>
            <person name="Wu D."/>
            <person name="Yang S."/>
            <person name="Yao Q.A."/>
            <person name="Ye J."/>
            <person name="Yeh R.-F."/>
            <person name="Zaveri J.S."/>
            <person name="Zhan M."/>
            <person name="Zhang G."/>
            <person name="Zhao Q."/>
            <person name="Zheng L."/>
            <person name="Zheng X.H."/>
            <person name="Zhong F.N."/>
            <person name="Zhong W."/>
            <person name="Zhou X."/>
            <person name="Zhu S.C."/>
            <person name="Zhu X."/>
            <person name="Smith H.O."/>
            <person name="Gibbs R.A."/>
            <person name="Myers E.W."/>
            <person name="Rubin G.M."/>
            <person name="Venter J.C."/>
        </authorList>
    </citation>
    <scope>NUCLEOTIDE SEQUENCE [LARGE SCALE GENOMIC DNA]</scope>
    <source>
        <strain>Berkeley</strain>
    </source>
</reference>
<reference key="4">
    <citation type="journal article" date="2002" name="Genome Biol.">
        <title>Annotation of the Drosophila melanogaster euchromatic genome: a systematic review.</title>
        <authorList>
            <person name="Misra S."/>
            <person name="Crosby M.A."/>
            <person name="Mungall C.J."/>
            <person name="Matthews B.B."/>
            <person name="Campbell K.S."/>
            <person name="Hradecky P."/>
            <person name="Huang Y."/>
            <person name="Kaminker J.S."/>
            <person name="Millburn G.H."/>
            <person name="Prochnik S.E."/>
            <person name="Smith C.D."/>
            <person name="Tupy J.L."/>
            <person name="Whitfield E.J."/>
            <person name="Bayraktaroglu L."/>
            <person name="Berman B.P."/>
            <person name="Bettencourt B.R."/>
            <person name="Celniker S.E."/>
            <person name="de Grey A.D.N.J."/>
            <person name="Drysdale R.A."/>
            <person name="Harris N.L."/>
            <person name="Richter J."/>
            <person name="Russo S."/>
            <person name="Schroeder A.J."/>
            <person name="Shu S.Q."/>
            <person name="Stapleton M."/>
            <person name="Yamada C."/>
            <person name="Ashburner M."/>
            <person name="Gelbart W.M."/>
            <person name="Rubin G.M."/>
            <person name="Lewis S.E."/>
        </authorList>
    </citation>
    <scope>GENOME REANNOTATION</scope>
    <scope>ALTERNATIVE SPLICING</scope>
    <source>
        <strain>Berkeley</strain>
    </source>
</reference>
<reference key="5">
    <citation type="journal article" date="2000" name="Science">
        <title>From sequence to chromosome: the tip of the X chromosome of D. melanogaster.</title>
        <authorList>
            <person name="Benos P.V."/>
            <person name="Gatt M.K."/>
            <person name="Ashburner M."/>
            <person name="Murphy L."/>
            <person name="Harris D."/>
            <person name="Barrell B.G."/>
            <person name="Ferraz C."/>
            <person name="Vidal S."/>
            <person name="Brun C."/>
            <person name="Demailles J."/>
            <person name="Cadieu E."/>
            <person name="Dreano S."/>
            <person name="Gloux S."/>
            <person name="Lelaure V."/>
            <person name="Mottier S."/>
            <person name="Galibert F."/>
            <person name="Borkova D."/>
            <person name="Minana B."/>
            <person name="Kafatos F.C."/>
            <person name="Louis C."/>
            <person name="Siden-Kiamos I."/>
            <person name="Bolshakov S."/>
            <person name="Papagiannakis G."/>
            <person name="Spanos L."/>
            <person name="Cox S."/>
            <person name="Madueno E."/>
            <person name="de Pablos B."/>
            <person name="Modolell J."/>
            <person name="Peter A."/>
            <person name="Schoettler P."/>
            <person name="Werner M."/>
            <person name="Mourkioti F."/>
            <person name="Beinert N."/>
            <person name="Dowe G."/>
            <person name="Schaefer U."/>
            <person name="Jaeckle H."/>
            <person name="Bucheton A."/>
            <person name="Callister D.M."/>
            <person name="Campbell L.A."/>
            <person name="Darlamitsou A."/>
            <person name="Henderson N.S."/>
            <person name="McMillan P.J."/>
            <person name="Salles C."/>
            <person name="Tait E.A."/>
            <person name="Valenti P."/>
            <person name="Saunders R.D.C."/>
            <person name="Glover D.M."/>
        </authorList>
    </citation>
    <scope>NUCLEOTIDE SEQUENCE [LARGE SCALE GENOMIC DNA]</scope>
    <source>
        <strain>Oregon-R</strain>
    </source>
</reference>
<reference key="6">
    <citation type="journal article" date="2002" name="Genome Biol.">
        <title>A Drosophila full-length cDNA resource.</title>
        <authorList>
            <person name="Stapleton M."/>
            <person name="Carlson J.W."/>
            <person name="Brokstein P."/>
            <person name="Yu C."/>
            <person name="Champe M."/>
            <person name="George R.A."/>
            <person name="Guarin H."/>
            <person name="Kronmiller B."/>
            <person name="Pacleb J.M."/>
            <person name="Park S."/>
            <person name="Wan K.H."/>
            <person name="Rubin G.M."/>
            <person name="Celniker S.E."/>
        </authorList>
    </citation>
    <scope>NUCLEOTIDE SEQUENCE [LARGE SCALE MRNA] (ISOFORM CYTOPLASMIC)</scope>
    <source>
        <strain>Berkeley</strain>
        <tissue>Embryo</tissue>
    </source>
</reference>
<reference key="7">
    <citation type="journal article" date="1994" name="Dev. Biol.">
        <title>Phosphorylation of the Drosophila adherens junction protein Armadillo: roles for wingless signal and zeste-white 3 kinase.</title>
        <authorList>
            <person name="Peifer M."/>
            <person name="Pai L.-M."/>
            <person name="Casey M."/>
        </authorList>
    </citation>
    <scope>PHOSPHORYLATION</scope>
</reference>
<reference key="8">
    <citation type="journal article" date="1996" name="J. Cell Biol.">
        <title>Distinct cellular and subcellular patterns of expression imply distinct functions for the Drosophila homologues of moesin and the neurofibromatosis 2 tumor suppressor, merlin.</title>
        <authorList>
            <person name="McCartney B.M."/>
            <person name="Fehon R.G."/>
        </authorList>
    </citation>
    <scope>INTERACTION WITH MER AND MOE</scope>
    <scope>SUBCELLULAR LOCATION</scope>
    <source>
        <strain>Oregon-R</strain>
        <tissue>Embryo</tissue>
    </source>
</reference>
<reference key="9">
    <citation type="journal article" date="2002" name="EMBO J.">
        <title>Casein kinase I phosphorylates the Armadillo protein and induces its degradation in Drosophila.</title>
        <authorList>
            <person name="Yanagawa S."/>
            <person name="Matsuda Y."/>
            <person name="Lee J.S."/>
            <person name="Matsubayashi H."/>
            <person name="Sese S."/>
            <person name="Kadowaki T."/>
            <person name="Ishimoto A."/>
        </authorList>
    </citation>
    <scope>PHOSPHORYLATION</scope>
</reference>
<reference key="10">
    <citation type="journal article" date="2004" name="Mol. Biol. Cell">
        <title>Gap junction channel protein innexin 2 is essential for epithelial morphogenesis in the Drosophila embryo.</title>
        <authorList>
            <person name="Bauer R."/>
            <person name="Lehmann C."/>
            <person name="Martini J."/>
            <person name="Eckardt F."/>
            <person name="Hoch M."/>
        </authorList>
    </citation>
    <scope>INTERACTION WITH INX2</scope>
</reference>
<reference key="11">
    <citation type="journal article" date="2006" name="Nature">
        <title>Type ID unconventional myosin controls left-right asymmetry in Drosophila.</title>
        <authorList>
            <person name="Speder P."/>
            <person name="Adam G."/>
            <person name="Noselli S."/>
        </authorList>
    </citation>
    <scope>INTERACTION WITH MYO31DF</scope>
    <scope>SUBCELLULAR LOCATION</scope>
</reference>
<reference key="12">
    <citation type="journal article" date="2008" name="J. Proteome Res.">
        <title>Phosphoproteome analysis of Drosophila melanogaster embryos.</title>
        <authorList>
            <person name="Zhai B."/>
            <person name="Villen J."/>
            <person name="Beausoleil S.A."/>
            <person name="Mintseris J."/>
            <person name="Gygi S.P."/>
        </authorList>
    </citation>
    <scope>PHOSPHORYLATION [LARGE SCALE ANALYSIS] AT THR-650; SER-688 AND SER-694</scope>
    <scope>IDENTIFICATION BY MASS SPECTROMETRY</scope>
    <source>
        <tissue>Embryo</tissue>
    </source>
</reference>
<reference key="13">
    <citation type="journal article" date="2012" name="Development">
        <title>DE-Cadherin regulates unconventional Myosin ID and Myosin IC in Drosophila left-right asymmetry establishment.</title>
        <authorList>
            <person name="Petzoldt A.G."/>
            <person name="Coutelis J.B."/>
            <person name="Geminard C."/>
            <person name="Speder P."/>
            <person name="Suzanne M."/>
            <person name="Cerezo D."/>
            <person name="Noselli S."/>
        </authorList>
    </citation>
    <scope>INTERACTION WITH MYO31DF</scope>
</reference>
<reference key="14">
    <citation type="journal article" date="2015" name="J. Cell Sci.">
        <title>alpha-Catenin phosphorylation promotes intercellular adhesion through a dual-kinase mechanism.</title>
        <authorList>
            <person name="Escobar D.J."/>
            <person name="Desai R."/>
            <person name="Ishiyama N."/>
            <person name="Folmsbee S.S."/>
            <person name="Novak M.N."/>
            <person name="Flozak A.S."/>
            <person name="Daugherty R.L."/>
            <person name="Mo R."/>
            <person name="Nanavati D."/>
            <person name="Sarpal R."/>
            <person name="Leckband D."/>
            <person name="Ikura M."/>
            <person name="Tepass U."/>
            <person name="Gottardi C.J."/>
        </authorList>
    </citation>
    <scope>SUBCELLULAR LOCATION</scope>
    <scope>INTERACTION WITH ALPHA-CAT</scope>
</reference>
<organism>
    <name type="scientific">Drosophila melanogaster</name>
    <name type="common">Fruit fly</name>
    <dbReference type="NCBI Taxonomy" id="7227"/>
    <lineage>
        <taxon>Eukaryota</taxon>
        <taxon>Metazoa</taxon>
        <taxon>Ecdysozoa</taxon>
        <taxon>Arthropoda</taxon>
        <taxon>Hexapoda</taxon>
        <taxon>Insecta</taxon>
        <taxon>Pterygota</taxon>
        <taxon>Neoptera</taxon>
        <taxon>Endopterygota</taxon>
        <taxon>Diptera</taxon>
        <taxon>Brachycera</taxon>
        <taxon>Muscomorpha</taxon>
        <taxon>Ephydroidea</taxon>
        <taxon>Drosophilidae</taxon>
        <taxon>Drosophila</taxon>
        <taxon>Sophophora</taxon>
    </lineage>
</organism>
<evidence type="ECO:0000269" key="1">
    <source>
    </source>
</evidence>
<evidence type="ECO:0000269" key="2">
    <source>
    </source>
</evidence>
<evidence type="ECO:0000269" key="3">
    <source>
    </source>
</evidence>
<evidence type="ECO:0000269" key="4">
    <source>
    </source>
</evidence>
<evidence type="ECO:0000269" key="5">
    <source>
    </source>
</evidence>
<evidence type="ECO:0000269" key="6">
    <source>
    </source>
</evidence>
<evidence type="ECO:0000269" key="7">
    <source>
    </source>
</evidence>
<evidence type="ECO:0000269" key="8">
    <source>
    </source>
</evidence>
<evidence type="ECO:0000269" key="9">
    <source>
    </source>
</evidence>
<evidence type="ECO:0000303" key="10">
    <source>
    </source>
</evidence>
<evidence type="ECO:0000305" key="11"/>
<keyword id="KW-0025">Alternative splicing</keyword>
<keyword id="KW-0130">Cell adhesion</keyword>
<keyword id="KW-0965">Cell junction</keyword>
<keyword id="KW-1003">Cell membrane</keyword>
<keyword id="KW-0963">Cytoplasm</keyword>
<keyword id="KW-0217">Developmental protein</keyword>
<keyword id="KW-0472">Membrane</keyword>
<keyword id="KW-0597">Phosphoprotein</keyword>
<keyword id="KW-1185">Reference proteome</keyword>
<keyword id="KW-0677">Repeat</keyword>
<keyword id="KW-0709">Segmentation polarity protein</keyword>
<keyword id="KW-0879">Wnt signaling pathway</keyword>
<gene>
    <name type="primary">arm</name>
    <name type="ORF">CG11579</name>
</gene>
<name>ARM_DROME</name>
<protein>
    <recommendedName>
        <fullName>Armadillo segment polarity protein</fullName>
    </recommendedName>
</protein>
<accession>P18824</accession>
<accession>A4V3V0</accession>
<accession>O02371</accession>
<accession>Q0KHX2</accession>
<accession>Q8IRW7</accession>
<accession>Q9W546</accession>
<feature type="chain" id="PRO_0000064292" description="Armadillo segment polarity protein">
    <location>
        <begin position="1"/>
        <end position="843"/>
    </location>
</feature>
<feature type="repeat" description="ARM 1">
    <location>
        <begin position="159"/>
        <end position="200"/>
    </location>
</feature>
<feature type="repeat" description="ARM 2">
    <location>
        <begin position="201"/>
        <end position="242"/>
    </location>
</feature>
<feature type="repeat" description="ARM 3">
    <location>
        <begin position="243"/>
        <end position="284"/>
    </location>
</feature>
<feature type="repeat" description="ARM 4">
    <location>
        <begin position="285"/>
        <end position="326"/>
    </location>
</feature>
<feature type="repeat" description="ARM 5">
    <location>
        <begin position="327"/>
        <end position="368"/>
    </location>
</feature>
<feature type="repeat" description="ARM 6">
    <location>
        <begin position="369"/>
        <end position="410"/>
    </location>
</feature>
<feature type="repeat" description="ARM 7">
    <location>
        <begin position="411"/>
        <end position="449"/>
    </location>
</feature>
<feature type="repeat" description="ARM 8">
    <location>
        <begin position="450"/>
        <end position="496"/>
    </location>
</feature>
<feature type="repeat" description="ARM 9">
    <location>
        <begin position="497"/>
        <end position="538"/>
    </location>
</feature>
<feature type="repeat" description="ARM 10">
    <location>
        <begin position="539"/>
        <end position="584"/>
    </location>
</feature>
<feature type="repeat" description="ARM 11">
    <location>
        <begin position="585"/>
        <end position="608"/>
    </location>
</feature>
<feature type="repeat" description="ARM 12">
    <location>
        <begin position="609"/>
        <end position="647"/>
    </location>
</feature>
<feature type="repeat" description="ARM 13; truncated">
    <location>
        <begin position="648"/>
        <end position="689"/>
    </location>
</feature>
<feature type="modified residue" description="Phosphothreonine" evidence="4">
    <location>
        <position position="650"/>
    </location>
</feature>
<feature type="modified residue" description="Phosphoserine" evidence="4">
    <location>
        <position position="688"/>
    </location>
</feature>
<feature type="modified residue" description="Phosphoserine" evidence="4">
    <location>
        <position position="694"/>
    </location>
</feature>
<feature type="splice variant" id="VSP_006738" description="In isoform Neural." evidence="10">
    <original>LGPEEAYEGLYGQGPPSVHSSHGGRAFHQQGYDTLPIDSMQGLEISSPVGGGGAGGAPGNGGAVGGASGGGGNIGAIPPSGAPTSPYSMDMDVGEIDAGALNFDLDAMPTPPNDNNNLAAWYDTDC</original>
    <variation>ILYQ</variation>
    <location>
        <begin position="718"/>
        <end position="843"/>
    </location>
</feature>
<dbReference type="EMBL" id="X54468">
    <property type="protein sequence ID" value="CAA38350.1"/>
    <property type="molecule type" value="Genomic_DNA"/>
</dbReference>
<dbReference type="EMBL" id="AF001213">
    <property type="protein sequence ID" value="AAB58731.1"/>
    <property type="molecule type" value="mRNA"/>
</dbReference>
<dbReference type="EMBL" id="AE014298">
    <property type="protein sequence ID" value="AAF45686.2"/>
    <property type="molecule type" value="Genomic_DNA"/>
</dbReference>
<dbReference type="EMBL" id="AE014298">
    <property type="protein sequence ID" value="AAF45687.2"/>
    <property type="molecule type" value="Genomic_DNA"/>
</dbReference>
<dbReference type="EMBL" id="AE014298">
    <property type="protein sequence ID" value="AAN09064.2"/>
    <property type="molecule type" value="Genomic_DNA"/>
</dbReference>
<dbReference type="EMBL" id="AE014298">
    <property type="protein sequence ID" value="AAS65246.1"/>
    <property type="molecule type" value="Genomic_DNA"/>
</dbReference>
<dbReference type="EMBL" id="AL021106">
    <property type="protein sequence ID" value="CAA15946.1"/>
    <property type="molecule type" value="Genomic_DNA"/>
</dbReference>
<dbReference type="EMBL" id="AL021086">
    <property type="protein sequence ID" value="CAA15946.1"/>
    <property type="status" value="JOINED"/>
    <property type="molecule type" value="Genomic_DNA"/>
</dbReference>
<dbReference type="EMBL" id="AL021086">
    <property type="protein sequence ID" value="CAA15935.1"/>
    <property type="molecule type" value="Genomic_DNA"/>
</dbReference>
<dbReference type="EMBL" id="AL021106">
    <property type="protein sequence ID" value="CAA15935.1"/>
    <property type="status" value="JOINED"/>
    <property type="molecule type" value="Genomic_DNA"/>
</dbReference>
<dbReference type="EMBL" id="AY118525">
    <property type="protein sequence ID" value="AAM49894.1"/>
    <property type="molecule type" value="mRNA"/>
</dbReference>
<dbReference type="PIR" id="T12689">
    <property type="entry name" value="T12689"/>
</dbReference>
<dbReference type="RefSeq" id="NP_001259149.1">
    <molecule id="P18824-1"/>
    <property type="nucleotide sequence ID" value="NM_001272220.1"/>
</dbReference>
<dbReference type="RefSeq" id="NP_476665.2">
    <molecule id="P18824-1"/>
    <property type="nucleotide sequence ID" value="NM_057317.4"/>
</dbReference>
<dbReference type="RefSeq" id="NP_476666.1">
    <molecule id="P18824-1"/>
    <property type="nucleotide sequence ID" value="NM_057318.4"/>
</dbReference>
<dbReference type="RefSeq" id="NP_599100.1">
    <molecule id="P18824-1"/>
    <property type="nucleotide sequence ID" value="NM_134273.2"/>
</dbReference>
<dbReference type="RefSeq" id="NP_726775.2">
    <molecule id="P18824-2"/>
    <property type="nucleotide sequence ID" value="NM_166912.2"/>
</dbReference>
<dbReference type="RefSeq" id="NP_996328.1">
    <molecule id="P18824-1"/>
    <property type="nucleotide sequence ID" value="NM_206605.2"/>
</dbReference>
<dbReference type="SMR" id="P18824"/>
<dbReference type="BioGRID" id="57697">
    <property type="interactions" value="127"/>
</dbReference>
<dbReference type="ComplexPortal" id="CPX-2563">
    <property type="entry name" value="Wnt enhanceosome complex"/>
</dbReference>
<dbReference type="DIP" id="DIP-19968N"/>
<dbReference type="FunCoup" id="P18824">
    <property type="interactions" value="1719"/>
</dbReference>
<dbReference type="IntAct" id="P18824">
    <property type="interactions" value="174"/>
</dbReference>
<dbReference type="MINT" id="P18824"/>
<dbReference type="STRING" id="7227.FBpp0089032"/>
<dbReference type="GlyGen" id="P18824">
    <property type="glycosylation" value="1 site"/>
</dbReference>
<dbReference type="iPTMnet" id="P18824"/>
<dbReference type="PaxDb" id="7227-FBpp0089035"/>
<dbReference type="EnsemblMetazoa" id="FBtr0089988">
    <molecule id="P18824-1"/>
    <property type="protein sequence ID" value="FBpp0089031"/>
    <property type="gene ID" value="FBgn0000117"/>
</dbReference>
<dbReference type="EnsemblMetazoa" id="FBtr0089989">
    <molecule id="P18824-1"/>
    <property type="protein sequence ID" value="FBpp0089032"/>
    <property type="gene ID" value="FBgn0000117"/>
</dbReference>
<dbReference type="EnsemblMetazoa" id="FBtr0089990">
    <molecule id="P18824-2"/>
    <property type="protein sequence ID" value="FBpp0089033"/>
    <property type="gene ID" value="FBgn0000117"/>
</dbReference>
<dbReference type="EnsemblMetazoa" id="FBtr0089991">
    <molecule id="P18824-1"/>
    <property type="protein sequence ID" value="FBpp0089034"/>
    <property type="gene ID" value="FBgn0000117"/>
</dbReference>
<dbReference type="EnsemblMetazoa" id="FBtr0089992">
    <molecule id="P18824-1"/>
    <property type="protein sequence ID" value="FBpp0089035"/>
    <property type="gene ID" value="FBgn0000117"/>
</dbReference>
<dbReference type="EnsemblMetazoa" id="FBtr0332583">
    <molecule id="P18824-1"/>
    <property type="protein sequence ID" value="FBpp0304835"/>
    <property type="gene ID" value="FBgn0000117"/>
</dbReference>
<dbReference type="GeneID" id="31151"/>
<dbReference type="KEGG" id="dme:Dmel_CG11579"/>
<dbReference type="AGR" id="FB:FBgn0000117"/>
<dbReference type="CTD" id="31151"/>
<dbReference type="FlyBase" id="FBgn0000117">
    <property type="gene designation" value="arm"/>
</dbReference>
<dbReference type="VEuPathDB" id="VectorBase:FBgn0000117"/>
<dbReference type="eggNOG" id="KOG4203">
    <property type="taxonomic scope" value="Eukaryota"/>
</dbReference>
<dbReference type="GeneTree" id="ENSGT00940000171121"/>
<dbReference type="InParanoid" id="P18824"/>
<dbReference type="OMA" id="DPLMFDM"/>
<dbReference type="OrthoDB" id="195736at2759"/>
<dbReference type="PhylomeDB" id="P18824"/>
<dbReference type="Reactome" id="R-DME-195253">
    <property type="pathway name" value="Degradation of beta-catenin by the destruction complex"/>
</dbReference>
<dbReference type="Reactome" id="R-DME-196299">
    <property type="pathway name" value="Beta-catenin phosphorylation cascade"/>
</dbReference>
<dbReference type="Reactome" id="R-DME-201681">
    <property type="pathway name" value="TCF dependent signaling in response to WNT"/>
</dbReference>
<dbReference type="Reactome" id="R-DME-201722">
    <property type="pathway name" value="Formation of the beta-catenin:TCF transactivating complex"/>
</dbReference>
<dbReference type="Reactome" id="R-DME-209214">
    <property type="pathway name" value="Phosphorylation of SMO"/>
</dbReference>
<dbReference type="Reactome" id="R-DME-209360">
    <property type="pathway name" value="Ubiquitination and proteolysis of phosphorylated CI"/>
</dbReference>
<dbReference type="Reactome" id="R-DME-209396">
    <property type="pathway name" value="Phosphorylation of ARM"/>
</dbReference>
<dbReference type="Reactome" id="R-DME-209407">
    <property type="pathway name" value="Transport of ARM to the nucleus"/>
</dbReference>
<dbReference type="Reactome" id="R-DME-209413">
    <property type="pathway name" value="Assembly of the 'destruction complex'"/>
</dbReference>
<dbReference type="Reactome" id="R-DME-209421">
    <property type="pathway name" value="Transcription activation by ARM"/>
</dbReference>
<dbReference type="Reactome" id="R-DME-209440">
    <property type="pathway name" value="Recruitment of the 'destruction complex' to the receptor complex, the degradation of AXN and release of ARM"/>
</dbReference>
<dbReference type="Reactome" id="R-DME-209461">
    <property type="pathway name" value="Ubiquitination and degradation of phosphorylated ARM"/>
</dbReference>
<dbReference type="Reactome" id="R-DME-3134973">
    <property type="pathway name" value="LRR FLII-interacting protein 1 (LRRFIP1) activates type I IFN production"/>
</dbReference>
<dbReference type="Reactome" id="R-DME-351906">
    <property type="pathway name" value="Apoptotic cleavage of cell adhesion proteins"/>
</dbReference>
<dbReference type="Reactome" id="R-DME-3769402">
    <property type="pathway name" value="Deactivation of the beta-catenin transactivating complex"/>
</dbReference>
<dbReference type="Reactome" id="R-DME-4086398">
    <property type="pathway name" value="Ca2+ pathway"/>
</dbReference>
<dbReference type="Reactome" id="R-DME-418990">
    <property type="pathway name" value="Adherens junctions interactions"/>
</dbReference>
<dbReference type="Reactome" id="R-DME-5218920">
    <property type="pathway name" value="VEGFR2 mediated vascular permeability"/>
</dbReference>
<dbReference type="Reactome" id="R-DME-525793">
    <property type="pathway name" value="Myogenesis"/>
</dbReference>
<dbReference type="Reactome" id="R-DME-6798695">
    <property type="pathway name" value="Neutrophil degranulation"/>
</dbReference>
<dbReference type="Reactome" id="R-DME-8853884">
    <property type="pathway name" value="Transcriptional Regulation by VENTX"/>
</dbReference>
<dbReference type="Reactome" id="R-DME-8951430">
    <property type="pathway name" value="RUNX3 regulates WNT signaling"/>
</dbReference>
<dbReference type="Reactome" id="R-DME-8980692">
    <property type="pathway name" value="RHOA GTPase cycle"/>
</dbReference>
<dbReference type="Reactome" id="R-DME-9013026">
    <property type="pathway name" value="RHOB GTPase cycle"/>
</dbReference>
<dbReference type="Reactome" id="R-DME-9013406">
    <property type="pathway name" value="RHOQ GTPase cycle"/>
</dbReference>
<dbReference type="Reactome" id="R-DME-9013407">
    <property type="pathway name" value="RHOH GTPase cycle"/>
</dbReference>
<dbReference type="Reactome" id="R-DME-9762292">
    <property type="pathway name" value="Regulation of CDH11 function"/>
</dbReference>
<dbReference type="Reactome" id="R-DME-9825892">
    <property type="pathway name" value="Regulation of MITF-M-dependent genes involved in cell cycle and proliferation"/>
</dbReference>
<dbReference type="SignaLink" id="P18824"/>
<dbReference type="BioGRID-ORCS" id="31151">
    <property type="hits" value="0 hits in 3 CRISPR screens"/>
</dbReference>
<dbReference type="ChiTaRS" id="arm">
    <property type="organism name" value="fly"/>
</dbReference>
<dbReference type="GenomeRNAi" id="31151"/>
<dbReference type="PRO" id="PR:P18824"/>
<dbReference type="Proteomes" id="UP000000803">
    <property type="component" value="Chromosome X"/>
</dbReference>
<dbReference type="Bgee" id="FBgn0000117">
    <property type="expression patterns" value="Expressed in wing disc and 264 other cell types or tissues"/>
</dbReference>
<dbReference type="ExpressionAtlas" id="P18824">
    <property type="expression patterns" value="baseline and differential"/>
</dbReference>
<dbReference type="GO" id="GO:0005912">
    <property type="term" value="C:adherens junction"/>
    <property type="evidence" value="ECO:0000314"/>
    <property type="project" value="UniProtKB"/>
</dbReference>
<dbReference type="GO" id="GO:0016324">
    <property type="term" value="C:apical plasma membrane"/>
    <property type="evidence" value="ECO:0000314"/>
    <property type="project" value="FlyBase"/>
</dbReference>
<dbReference type="GO" id="GO:0030424">
    <property type="term" value="C:axon"/>
    <property type="evidence" value="ECO:0000314"/>
    <property type="project" value="FlyBase"/>
</dbReference>
<dbReference type="GO" id="GO:1990907">
    <property type="term" value="C:beta-catenin-TCF complex"/>
    <property type="evidence" value="ECO:0000314"/>
    <property type="project" value="FlyBase"/>
</dbReference>
<dbReference type="GO" id="GO:0016342">
    <property type="term" value="C:catenin complex"/>
    <property type="evidence" value="ECO:0000314"/>
    <property type="project" value="FlyBase"/>
</dbReference>
<dbReference type="GO" id="GO:0005737">
    <property type="term" value="C:cytoplasm"/>
    <property type="evidence" value="ECO:0000318"/>
    <property type="project" value="GO_Central"/>
</dbReference>
<dbReference type="GO" id="GO:0005829">
    <property type="term" value="C:cytosol"/>
    <property type="evidence" value="ECO:0000304"/>
    <property type="project" value="Reactome"/>
</dbReference>
<dbReference type="GO" id="GO:0030139">
    <property type="term" value="C:endocytic vesicle"/>
    <property type="evidence" value="ECO:0000314"/>
    <property type="project" value="FlyBase"/>
</dbReference>
<dbReference type="GO" id="GO:0045172">
    <property type="term" value="C:germline ring canal"/>
    <property type="evidence" value="ECO:0000314"/>
    <property type="project" value="FlyBase"/>
</dbReference>
<dbReference type="GO" id="GO:0005654">
    <property type="term" value="C:nucleoplasm"/>
    <property type="evidence" value="ECO:0000304"/>
    <property type="project" value="Reactome"/>
</dbReference>
<dbReference type="GO" id="GO:0005634">
    <property type="term" value="C:nucleus"/>
    <property type="evidence" value="ECO:0000314"/>
    <property type="project" value="FlyBase"/>
</dbReference>
<dbReference type="GO" id="GO:0005886">
    <property type="term" value="C:plasma membrane"/>
    <property type="evidence" value="ECO:0000314"/>
    <property type="project" value="UniProtKB"/>
</dbReference>
<dbReference type="GO" id="GO:0016028">
    <property type="term" value="C:rhabdomere"/>
    <property type="evidence" value="ECO:0000314"/>
    <property type="project" value="FlyBase"/>
</dbReference>
<dbReference type="GO" id="GO:0005915">
    <property type="term" value="C:zonula adherens"/>
    <property type="evidence" value="ECO:0000314"/>
    <property type="project" value="FlyBase"/>
</dbReference>
<dbReference type="GO" id="GO:0045294">
    <property type="term" value="F:alpha-catenin binding"/>
    <property type="evidence" value="ECO:0000318"/>
    <property type="project" value="GO_Central"/>
</dbReference>
<dbReference type="GO" id="GO:0045296">
    <property type="term" value="F:cadherin binding"/>
    <property type="evidence" value="ECO:0000315"/>
    <property type="project" value="UniProtKB"/>
</dbReference>
<dbReference type="GO" id="GO:0140297">
    <property type="term" value="F:DNA-binding transcription factor binding"/>
    <property type="evidence" value="ECO:0000353"/>
    <property type="project" value="UniProtKB"/>
</dbReference>
<dbReference type="GO" id="GO:0019900">
    <property type="term" value="F:kinase binding"/>
    <property type="evidence" value="ECO:0000353"/>
    <property type="project" value="FlyBase"/>
</dbReference>
<dbReference type="GO" id="GO:0016922">
    <property type="term" value="F:nuclear receptor binding"/>
    <property type="evidence" value="ECO:0000318"/>
    <property type="project" value="GO_Central"/>
</dbReference>
<dbReference type="GO" id="GO:0019903">
    <property type="term" value="F:protein phosphatase binding"/>
    <property type="evidence" value="ECO:0000318"/>
    <property type="project" value="GO_Central"/>
</dbReference>
<dbReference type="GO" id="GO:0003713">
    <property type="term" value="F:transcription coactivator activity"/>
    <property type="evidence" value="ECO:0000314"/>
    <property type="project" value="WormBase"/>
</dbReference>
<dbReference type="GO" id="GO:0035147">
    <property type="term" value="P:branch fusion, open tracheal system"/>
    <property type="evidence" value="ECO:0000315"/>
    <property type="project" value="FlyBase"/>
</dbReference>
<dbReference type="GO" id="GO:0048754">
    <property type="term" value="P:branching morphogenesis of an epithelial tube"/>
    <property type="evidence" value="ECO:0000315"/>
    <property type="project" value="FlyBase"/>
</dbReference>
<dbReference type="GO" id="GO:0060070">
    <property type="term" value="P:canonical Wnt signaling pathway"/>
    <property type="evidence" value="ECO:0000314"/>
    <property type="project" value="FlyBase"/>
</dbReference>
<dbReference type="GO" id="GO:0007155">
    <property type="term" value="P:cell adhesion"/>
    <property type="evidence" value="ECO:0000315"/>
    <property type="project" value="FlyBase"/>
</dbReference>
<dbReference type="GO" id="GO:0090254">
    <property type="term" value="P:cell elongation involved in imaginal disc-derived wing morphogenesis"/>
    <property type="evidence" value="ECO:0000315"/>
    <property type="project" value="FlyBase"/>
</dbReference>
<dbReference type="GO" id="GO:0001709">
    <property type="term" value="P:cell fate determination"/>
    <property type="evidence" value="ECO:0000315"/>
    <property type="project" value="FlyBase"/>
</dbReference>
<dbReference type="GO" id="GO:0000902">
    <property type="term" value="P:cell morphogenesis"/>
    <property type="evidence" value="ECO:0000315"/>
    <property type="project" value="FlyBase"/>
</dbReference>
<dbReference type="GO" id="GO:0098609">
    <property type="term" value="P:cell-cell adhesion"/>
    <property type="evidence" value="ECO:0000315"/>
    <property type="project" value="FlyBase"/>
</dbReference>
<dbReference type="GO" id="GO:0035293">
    <property type="term" value="P:chitin-based larval cuticle pattern formation"/>
    <property type="evidence" value="ECO:0000315"/>
    <property type="project" value="FlyBase"/>
</dbReference>
<dbReference type="GO" id="GO:0001745">
    <property type="term" value="P:compound eye morphogenesis"/>
    <property type="evidence" value="ECO:0000315"/>
    <property type="project" value="FlyBase"/>
</dbReference>
<dbReference type="GO" id="GO:0046667">
    <property type="term" value="P:compound eye retinal cell programmed cell death"/>
    <property type="evidence" value="ECO:0000315"/>
    <property type="project" value="FlyBase"/>
</dbReference>
<dbReference type="GO" id="GO:0035017">
    <property type="term" value="P:cuticle pattern formation"/>
    <property type="evidence" value="ECO:0000315"/>
    <property type="project" value="FlyBase"/>
</dbReference>
<dbReference type="GO" id="GO:0060232">
    <property type="term" value="P:delamination"/>
    <property type="evidence" value="ECO:0000315"/>
    <property type="project" value="FlyBase"/>
</dbReference>
<dbReference type="GO" id="GO:0007391">
    <property type="term" value="P:dorsal closure"/>
    <property type="evidence" value="ECO:0000315"/>
    <property type="project" value="FlyBase"/>
</dbReference>
<dbReference type="GO" id="GO:0035153">
    <property type="term" value="P:epithelial cell type specification, open tracheal system"/>
    <property type="evidence" value="ECO:0000315"/>
    <property type="project" value="FlyBase"/>
</dbReference>
<dbReference type="GO" id="GO:0007301">
    <property type="term" value="P:female germline ring canal formation"/>
    <property type="evidence" value="ECO:0000316"/>
    <property type="project" value="FlyBase"/>
</dbReference>
<dbReference type="GO" id="GO:0060250">
    <property type="term" value="P:germ-line stem-cell niche homeostasis"/>
    <property type="evidence" value="ECO:0000315"/>
    <property type="project" value="FlyBase"/>
</dbReference>
<dbReference type="GO" id="GO:0007507">
    <property type="term" value="P:heart development"/>
    <property type="evidence" value="ECO:0000315"/>
    <property type="project" value="FlyBase"/>
</dbReference>
<dbReference type="GO" id="GO:0060914">
    <property type="term" value="P:heart formation"/>
    <property type="evidence" value="ECO:0000315"/>
    <property type="project" value="FlyBase"/>
</dbReference>
<dbReference type="GO" id="GO:0048526">
    <property type="term" value="P:imaginal disc-derived wing expansion"/>
    <property type="evidence" value="ECO:0000315"/>
    <property type="project" value="FlyBase"/>
</dbReference>
<dbReference type="GO" id="GO:0008587">
    <property type="term" value="P:imaginal disc-derived wing margin morphogenesis"/>
    <property type="evidence" value="ECO:0000315"/>
    <property type="project" value="FlyBase"/>
</dbReference>
<dbReference type="GO" id="GO:0007616">
    <property type="term" value="P:long-term memory"/>
    <property type="evidence" value="ECO:0000315"/>
    <property type="project" value="FlyBase"/>
</dbReference>
<dbReference type="GO" id="GO:0000122">
    <property type="term" value="P:negative regulation of transcription by RNA polymerase II"/>
    <property type="evidence" value="ECO:0000315"/>
    <property type="project" value="FlyBase"/>
</dbReference>
<dbReference type="GO" id="GO:0014019">
    <property type="term" value="P:neuroblast development"/>
    <property type="evidence" value="ECO:0000315"/>
    <property type="project" value="FlyBase"/>
</dbReference>
<dbReference type="GO" id="GO:0014017">
    <property type="term" value="P:neuroblast fate commitment"/>
    <property type="evidence" value="ECO:0000315"/>
    <property type="project" value="UniProtKB"/>
</dbReference>
<dbReference type="GO" id="GO:0048477">
    <property type="term" value="P:oogenesis"/>
    <property type="evidence" value="ECO:0000315"/>
    <property type="project" value="FlyBase"/>
</dbReference>
<dbReference type="GO" id="GO:0046530">
    <property type="term" value="P:photoreceptor cell differentiation"/>
    <property type="evidence" value="ECO:0000315"/>
    <property type="project" value="FlyBase"/>
</dbReference>
<dbReference type="GO" id="GO:0045893">
    <property type="term" value="P:positive regulation of DNA-templated transcription"/>
    <property type="evidence" value="ECO:0000315"/>
    <property type="project" value="FlyBase"/>
</dbReference>
<dbReference type="GO" id="GO:0045944">
    <property type="term" value="P:positive regulation of transcription by RNA polymerase II"/>
    <property type="evidence" value="ECO:0000314"/>
    <property type="project" value="WormBase"/>
</dbReference>
<dbReference type="GO" id="GO:0071896">
    <property type="term" value="P:protein localization to adherens junction"/>
    <property type="evidence" value="ECO:0000315"/>
    <property type="project" value="FlyBase"/>
</dbReference>
<dbReference type="GO" id="GO:0072659">
    <property type="term" value="P:protein localization to plasma membrane"/>
    <property type="evidence" value="ECO:0000315"/>
    <property type="project" value="FlyBase"/>
</dbReference>
<dbReference type="GO" id="GO:0007367">
    <property type="term" value="P:segment polarity determination"/>
    <property type="evidence" value="ECO:0000315"/>
    <property type="project" value="FlyBase"/>
</dbReference>
<dbReference type="GO" id="GO:0035019">
    <property type="term" value="P:somatic stem cell population maintenance"/>
    <property type="evidence" value="ECO:0000315"/>
    <property type="project" value="FlyBase"/>
</dbReference>
<dbReference type="GO" id="GO:0007370">
    <property type="term" value="P:ventral furrow formation"/>
    <property type="evidence" value="ECO:0000315"/>
    <property type="project" value="FlyBase"/>
</dbReference>
<dbReference type="GO" id="GO:0007472">
    <property type="term" value="P:wing disc morphogenesis"/>
    <property type="evidence" value="ECO:0000315"/>
    <property type="project" value="FlyBase"/>
</dbReference>
<dbReference type="GO" id="GO:0045186">
    <property type="term" value="P:zonula adherens assembly"/>
    <property type="evidence" value="ECO:0000315"/>
    <property type="project" value="FlyBase"/>
</dbReference>
<dbReference type="CDD" id="cd21726">
    <property type="entry name" value="CTNNAbd_dArm"/>
    <property type="match status" value="1"/>
</dbReference>
<dbReference type="FunFam" id="1.25.10.10:FF:000015">
    <property type="entry name" value="Catenin beta-1"/>
    <property type="match status" value="1"/>
</dbReference>
<dbReference type="Gene3D" id="1.25.10.10">
    <property type="entry name" value="Leucine-rich Repeat Variant"/>
    <property type="match status" value="1"/>
</dbReference>
<dbReference type="InterPro" id="IPR011989">
    <property type="entry name" value="ARM-like"/>
</dbReference>
<dbReference type="InterPro" id="IPR016024">
    <property type="entry name" value="ARM-type_fold"/>
</dbReference>
<dbReference type="InterPro" id="IPR000225">
    <property type="entry name" value="Armadillo"/>
</dbReference>
<dbReference type="InterPro" id="IPR013284">
    <property type="entry name" value="Beta-catenin"/>
</dbReference>
<dbReference type="PANTHER" id="PTHR45976">
    <property type="entry name" value="ARMADILLO SEGMENT POLARITY PROTEIN"/>
    <property type="match status" value="1"/>
</dbReference>
<dbReference type="Pfam" id="PF00514">
    <property type="entry name" value="Arm"/>
    <property type="match status" value="4"/>
</dbReference>
<dbReference type="PRINTS" id="PR01869">
    <property type="entry name" value="BCATNINFAMLY"/>
</dbReference>
<dbReference type="SMART" id="SM00185">
    <property type="entry name" value="ARM"/>
    <property type="match status" value="12"/>
</dbReference>
<dbReference type="SUPFAM" id="SSF48371">
    <property type="entry name" value="ARM repeat"/>
    <property type="match status" value="1"/>
</dbReference>
<dbReference type="PROSITE" id="PS50176">
    <property type="entry name" value="ARM_REPEAT"/>
    <property type="match status" value="9"/>
</dbReference>
<sequence>MSYMPAQNRTMSHNNQYNPPDLPPMVSAKEQTLMWQQNSYLGDSGIHSGAVTQVPSLSGKEDEEMEGDPLMFDLDTGFPQNFTQDQVDDMNQQLSQTRSQRVRAAMFPETLEEGIEIPSTQFDPQQPTAVQRLSEPSQMLKHAVVNLINYQDDAELATRAIPELIKLLNDEDQVVVSQAAMMVHQLSKKEASRHAIMNSPQMVAALVRAISNSNDLESTKAAVGTLHNLSHHRQGLLAIFKSGGIPALVKLLSSPVESVLFYAITTLHNLLLHQDGSKMAVRLAGGLQKMVTLLQRNNVKFLAIVTDCLQILAYGNQESKLIILASGGPNELVRIMRSYDYEKLLWTTSRVLKVLSVCSSNKPAIVDAGGMQALAMHLGNMSPRLVQNCLWTLRNLSDAATKVEGLEALLQSLVQVLGSTDVNVVTCAAGILSNLTCNNQRNKATVCQVGGVDALVRTIINAGDREEITEPAVCALRHLTSRHVDSELAQNAVRLNYGLSVIVKLLHPPSRWPLIKAVIGLIRNLALCPANHAPLREHGAIHHLVRLLMRAFQDTERQRSSIATTGSQQPSAYADGVRMEEIVEGTVGALHILARESHNRALIRQQSVIPIFVRLLFNEIENIQRVAAGVLCELAADKEGAEIIEQEGATGPLTDLLHSRNEGVATYAAAVLFRMSEDKPQDYKKRLSIELTNSLLREDNNIWANADLGMGPDLQDMLGPEEAYEGLYGQGPPSVHSSHGGRAFHQQGYDTLPIDSMQGLEISSPVGGGGAGGAPGNGGAVGGASGGGGNIGAIPPSGAPTSPYSMDMDVGEIDAGALNFDLDAMPTPPNDNNNLAAWYDTDC</sequence>
<comment type="function">
    <text evidence="9">Isoform neural may associate with CadN and participate in the transmission of developmental information. Can associate with alpha-catenin. Isoform cytoplasmic accumulates through wg signaling; arm function in wg signal transduction is required early in development for determination of neuroblast fate. Arm and Abl proteins function cooperatively at adherens junctions in both the CNS and epidermis.</text>
</comment>
<comment type="subunit">
    <text evidence="2 3 5 6 8">Interacts with Mer and Moe at the adherens junction (PubMed:8666669). Interacts with Inx2 (PubMed:15047872). Interacts with alpha-Cat (PubMed:25653389). Interacts with Myo31DF (PubMed:16598259, PubMed:22491943).</text>
</comment>
<comment type="interaction">
    <interactant intactId="EBI-216128">
        <id>P18824</id>
    </interactant>
    <interactant intactId="EBI-126806">
        <id>P35220</id>
        <label>alpha-Cat</label>
    </interactant>
    <organismsDiffer>false</organismsDiffer>
    <experiments>4</experiments>
</comment>
<comment type="interaction">
    <interactant intactId="EBI-216128">
        <id>P18824</id>
    </interactant>
    <interactant intactId="EBI-141287">
        <id>Q9W0N9</id>
        <label>ebd1</label>
    </interactant>
    <organismsDiffer>false</organismsDiffer>
    <experiments>3</experiments>
</comment>
<comment type="interaction">
    <interactant intactId="EBI-216128">
        <id>P18824</id>
    </interactant>
    <interactant intactId="EBI-367628">
        <id>Q24368</id>
        <label>Iswi</label>
    </interactant>
    <organismsDiffer>false</organismsDiffer>
    <experiments>2</experiments>
</comment>
<comment type="interaction">
    <interactant intactId="EBI-216128">
        <id>P18824</id>
    </interactant>
    <interactant intactId="EBI-85519">
        <id>Q961D9</id>
        <label>lgs</label>
    </interactant>
    <organismsDiffer>false</organismsDiffer>
    <experiments>5</experiments>
</comment>
<comment type="interaction">
    <interactant intactId="EBI-216128">
        <id>P18824</id>
    </interactant>
    <interactant intactId="EBI-868028">
        <id>O01368</id>
        <label>nej</label>
    </interactant>
    <organismsDiffer>false</organismsDiffer>
    <experiments>3</experiments>
</comment>
<comment type="interaction">
    <interactant intactId="EBI-216128">
        <id>P18824</id>
    </interactant>
    <interactant intactId="EBI-147301">
        <id>P91943</id>
        <label>pan</label>
    </interactant>
    <organismsDiffer>false</organismsDiffer>
    <experiments>2</experiments>
</comment>
<comment type="interaction">
    <interactant intactId="EBI-216128">
        <id>P18824</id>
    </interactant>
    <interactant intactId="EBI-533127">
        <id>O00512</id>
        <label>BCL9</label>
    </interactant>
    <organismsDiffer>true</organismsDiffer>
    <experiments>3</experiments>
</comment>
<comment type="subcellular location">
    <subcellularLocation>
        <location evidence="8">Cytoplasm</location>
    </subcellularLocation>
    <subcellularLocation>
        <location evidence="8">Cell membrane</location>
        <topology evidence="8">Peripheral membrane protein</topology>
        <orientation evidence="8">Cytoplasmic side</orientation>
    </subcellularLocation>
    <subcellularLocation>
        <location evidence="3 6">Cell junction</location>
        <location evidence="3 6">Adherens junction</location>
    </subcellularLocation>
    <text>Inner surface of cell membrane and adherens junction.</text>
</comment>
<comment type="alternative products">
    <event type="alternative splicing"/>
    <isoform>
        <id>P18824-1</id>
        <name>Cytoplasmic</name>
        <name>A</name>
        <name>B</name>
        <sequence type="displayed"/>
    </isoform>
    <isoform>
        <id>P18824-2</id>
        <name>Neural</name>
        <name>C</name>
        <sequence type="described" ref="VSP_006738"/>
    </isoform>
</comment>
<comment type="tissue specificity">
    <text evidence="9">Isoform cytoplasmic accumulates at low levels in axons, at high levels in specific cells along the CNS midline and in leg and eye imaginal disks. Isoform neural accumulates in the axon tracts of the CNS. Both isoforms accumulate in the peripheral nervous system.</text>
</comment>
<comment type="developmental stage">
    <text>Present at all stages, but reaches the highest levels during early to mid-embryogenesis. Isoform cytoplasmic is the predominant one from the cellular blastoderm stage until germ-band retraction. Isoform neural is first seen after germ band retraction.</text>
</comment>
<comment type="PTM">
    <text evidence="1 7">Phosphorylated on Ser, Thr and Tyr residues (PubMed:7529201). Level of phosphorylation varies both during embryonic development and from embryonic tissue to tissue (PubMed:7529201). Sgg is required for phosphorylation and wg signal negatively regulates arm phosphorylation (PubMed:7529201). Hypophosphorylated form of arm increases in steady-state levels (PubMed:7529201). Phosphorylated directly or indirectly by CkIalpha which stimulates its degradation (PubMed:11927557).</text>
</comment>
<comment type="similarity">
    <text evidence="11">Belongs to the beta-catenin family.</text>
</comment>